<keyword id="KW-0256">Endoplasmic reticulum</keyword>
<keyword id="KW-0349">Heme</keyword>
<keyword id="KW-0408">Iron</keyword>
<keyword id="KW-0472">Membrane</keyword>
<keyword id="KW-0479">Metal-binding</keyword>
<keyword id="KW-0492">Microsome</keyword>
<keyword id="KW-0503">Monooxygenase</keyword>
<keyword id="KW-0560">Oxidoreductase</keyword>
<comment type="function">
    <text>Cytochromes P450 are a group of heme-thiolate monooxygenases. They oxidize a variety of structurally unrelated compounds, including steroids, fatty acids, and xenobiotics.</text>
</comment>
<comment type="catalytic activity">
    <reaction>
        <text>an organic molecule + reduced [NADPH--hemoprotein reductase] + O2 = an alcohol + oxidized [NADPH--hemoprotein reductase] + H2O + H(+)</text>
        <dbReference type="Rhea" id="RHEA:17149"/>
        <dbReference type="Rhea" id="RHEA-COMP:11964"/>
        <dbReference type="Rhea" id="RHEA-COMP:11965"/>
        <dbReference type="ChEBI" id="CHEBI:15377"/>
        <dbReference type="ChEBI" id="CHEBI:15378"/>
        <dbReference type="ChEBI" id="CHEBI:15379"/>
        <dbReference type="ChEBI" id="CHEBI:30879"/>
        <dbReference type="ChEBI" id="CHEBI:57618"/>
        <dbReference type="ChEBI" id="CHEBI:58210"/>
        <dbReference type="ChEBI" id="CHEBI:142491"/>
        <dbReference type="EC" id="1.14.14.1"/>
    </reaction>
</comment>
<comment type="cofactor">
    <cofactor evidence="1">
        <name>heme</name>
        <dbReference type="ChEBI" id="CHEBI:30413"/>
    </cofactor>
</comment>
<comment type="subcellular location">
    <subcellularLocation>
        <location>Endoplasmic reticulum membrane</location>
        <topology>Peripheral membrane protein</topology>
    </subcellularLocation>
    <subcellularLocation>
        <location>Microsome membrane</location>
        <topology>Peripheral membrane protein</topology>
    </subcellularLocation>
</comment>
<comment type="tissue specificity">
    <text>Liver.</text>
</comment>
<comment type="induction">
    <text>By 3-methylcholanthrene (3MC).</text>
</comment>
<comment type="similarity">
    <text evidence="2">Belongs to the cytochrome P450 family.</text>
</comment>
<comment type="sequence caution" evidence="2">
    <conflict type="miscellaneous discrepancy">
        <sequence resource="EMBL-CDS" id="AAA49550"/>
    </conflict>
    <text>Chimera. Its N-terminal part has been shown to be derived from what is now known as the CYP1A3. CYP1A1 has also been called CYP1A2.</text>
</comment>
<sequence length="522" mass="59344">MVLMILPIIGSVSVSEGLVAIVTLCLVYMLMKYKHTEIPEGLKRLPGPKPLPIIGNVLEVYNNPHLSLTAMSERYGSVFQIQIGMRPVVVLSGNETVRQALIKQGEDFAGRPDLYSFKFINDGKSLAFSTDKAGVWRARRKLAMSALRSFATLEGTTPEYSCALEEHVCKEGEYLVKQLTSVMDVSGSFDPFRHIVVSVANVICGMCFGRRYSHDDQELLGLVNMSDEFGQVVGSGNPADFIPILRYLPNRTMKRFMDINDRFNNFVQKIVSEHYESYDKDNIRDITDSLIDHCEDRKLDENANIQVSDEKIVGIVNDLFGAGFDTISTALSWAVVYLVAYPEIQERLHQELKEKVGMIRTPRLSDKINLPLLEAFILEIFRHSSFLPFTIPHCTIKDTSLNGYFIPKDTCVFINQWQVNHDPELWKEPSSFNPDRFLSADGTELNKLEGEKVLVFGMDKRRCIGEAIGRNEVYLFLAILLQRLRFQEKPGHPLDMTPEYGLTMKHKRCQLKASMRPWGQEE</sequence>
<feature type="chain" id="PRO_0000051641" description="Cytochrome P450 1A1">
    <location>
        <begin position="1"/>
        <end position="522"/>
    </location>
</feature>
<feature type="binding site" evidence="1">
    <location>
        <position position="229"/>
    </location>
    <ligand>
        <name>substrate</name>
    </ligand>
</feature>
<feature type="binding site" description="axial binding residue" evidence="1">
    <location>
        <position position="463"/>
    </location>
    <ligand>
        <name>heme</name>
        <dbReference type="ChEBI" id="CHEBI:30413"/>
    </ligand>
    <ligandPart>
        <name>Fe</name>
        <dbReference type="ChEBI" id="CHEBI:18248"/>
    </ligandPart>
</feature>
<feature type="sequence conflict" description="In Ref. 3; AAB69383." evidence="2" ref="3">
    <original>L</original>
    <variation>P</variation>
    <location>
        <position position="51"/>
    </location>
</feature>
<feature type="sequence conflict" description="In Ref. 3; AAB69383." evidence="2" ref="3">
    <original>V</original>
    <variation>D</variation>
    <location>
        <position position="97"/>
    </location>
</feature>
<feature type="sequence conflict" description="In Ref. 3; AAB69383." evidence="2" ref="3">
    <original>K</original>
    <variation>N</variation>
    <location>
        <position position="124"/>
    </location>
</feature>
<feature type="sequence conflict" description="In Ref. 3; AAB69383." evidence="2" ref="3">
    <original>Q</original>
    <variation>H</variation>
    <location>
        <position position="306"/>
    </location>
</feature>
<feature type="sequence conflict" description="In Ref. 3; AAB69383." evidence="2" ref="3">
    <original>T</original>
    <variation>I</variation>
    <location>
        <position position="390"/>
    </location>
</feature>
<feature type="sequence conflict" description="In Ref. 2; AAB40627." evidence="2" ref="2">
    <original>D</original>
    <variation>G</variation>
    <location>
        <position position="459"/>
    </location>
</feature>
<feature type="sequence conflict" description="In Ref. 3; AAB69383." evidence="2" ref="3">
    <original>R</original>
    <variation>H</variation>
    <location>
        <position position="470"/>
    </location>
</feature>
<feature type="sequence conflict" description="In Ref. 1; AAD14036/AAA49550." evidence="2" ref="1">
    <original>Y</original>
    <variation>F</variation>
    <location>
        <position position="474"/>
    </location>
</feature>
<feature type="sequence conflict" description="In Ref. 2; AAB40627." evidence="2" ref="2">
    <original>R</original>
    <variation>K</variation>
    <location>
        <position position="483"/>
    </location>
</feature>
<reference key="1">
    <citation type="journal article" date="1994" name="Arch. Biochem. Biophys.">
        <title>Two unique CYP1 genes are expressed in response to 3-methylcholanthrene treatment in rainbow trout.</title>
        <authorList>
            <person name="Berndtson A.K."/>
            <person name="Chen T.T."/>
        </authorList>
    </citation>
    <scope>NUCLEOTIDE SEQUENCE [GENOMIC DNA]</scope>
    <source>
        <tissue>Liver</tissue>
    </source>
</reference>
<reference key="2">
    <citation type="submission" date="1997-01" db="EMBL/GenBank/DDBJ databases">
        <title>Cloning, sequencing and functional expression of two trout CYP1A cDNAs in yeast.</title>
        <authorList>
            <person name="Bailey G."/>
            <person name="You L."/>
            <person name="Harttig U."/>
        </authorList>
    </citation>
    <scope>NUCLEOTIDE SEQUENCE [MRNA]</scope>
</reference>
<reference key="3">
    <citation type="submission" date="1997-07" db="EMBL/GenBank/DDBJ databases">
        <title>Cloning, sequencing and aflatoxin B1 metabolism by multiple rainbow trout CYP1A cDNAs expressed in yeast.</title>
        <authorList>
            <person name="Bailey G."/>
            <person name="You L."/>
            <person name="Harttig U."/>
        </authorList>
    </citation>
    <scope>NUCLEOTIDE SEQUENCE [MRNA]</scope>
</reference>
<reference key="4">
    <citation type="journal article" date="1988" name="DNA">
        <title>Trout P450IA1: cDNA and deduced protein sequence, expression in liver, and evolutionary significance.</title>
        <authorList>
            <person name="Heilmann L.J."/>
            <person name="Sheen Y.-Y."/>
            <person name="Bigelow S.W."/>
            <person name="Nebert D.W."/>
        </authorList>
    </citation>
    <scope>NUCLEOTIDE SEQUENCE [MRNA]</scope>
    <source>
        <tissue>Liver</tissue>
    </source>
</reference>
<accession>Q92110</accession>
<accession>O42195</accession>
<accession>P10609</accession>
<accession>P79830</accession>
<dbReference type="EC" id="1.14.14.1"/>
<dbReference type="EMBL" id="S69278">
    <property type="protein sequence ID" value="AAD14036.1"/>
    <property type="molecule type" value="Genomic_DNA"/>
</dbReference>
<dbReference type="EMBL" id="U62797">
    <property type="protein sequence ID" value="AAB40627.1"/>
    <property type="molecule type" value="mRNA"/>
</dbReference>
<dbReference type="EMBL" id="AF015660">
    <property type="protein sequence ID" value="AAB69383.1"/>
    <property type="molecule type" value="mRNA"/>
</dbReference>
<dbReference type="EMBL" id="M21310">
    <property type="protein sequence ID" value="AAA49550.1"/>
    <property type="status" value="ALT_SEQ"/>
    <property type="molecule type" value="mRNA"/>
</dbReference>
<dbReference type="PIR" id="A28789">
    <property type="entry name" value="A28789"/>
</dbReference>
<dbReference type="PIR" id="S51557">
    <property type="entry name" value="S51557"/>
</dbReference>
<dbReference type="SMR" id="Q92110"/>
<dbReference type="ABCD" id="Q92110">
    <property type="antibodies" value="3 sequenced antibodies"/>
</dbReference>
<dbReference type="Proteomes" id="UP000694395">
    <property type="component" value="Unplaced"/>
</dbReference>
<dbReference type="GO" id="GO:0009925">
    <property type="term" value="C:basal plasma membrane"/>
    <property type="evidence" value="ECO:0000314"/>
    <property type="project" value="AgBase"/>
</dbReference>
<dbReference type="GO" id="GO:0005737">
    <property type="term" value="C:cytoplasm"/>
    <property type="evidence" value="ECO:0000314"/>
    <property type="project" value="AgBase"/>
</dbReference>
<dbReference type="GO" id="GO:0005789">
    <property type="term" value="C:endoplasmic reticulum membrane"/>
    <property type="evidence" value="ECO:0007669"/>
    <property type="project" value="UniProtKB-SubCell"/>
</dbReference>
<dbReference type="GO" id="GO:0000792">
    <property type="term" value="C:heterochromatin"/>
    <property type="evidence" value="ECO:0000314"/>
    <property type="project" value="AgBase"/>
</dbReference>
<dbReference type="GO" id="GO:0031528">
    <property type="term" value="C:microvillus membrane"/>
    <property type="evidence" value="ECO:0000314"/>
    <property type="project" value="AgBase"/>
</dbReference>
<dbReference type="GO" id="GO:0031965">
    <property type="term" value="C:nuclear membrane"/>
    <property type="evidence" value="ECO:0000314"/>
    <property type="project" value="AgBase"/>
</dbReference>
<dbReference type="GO" id="GO:0048471">
    <property type="term" value="C:perinuclear region of cytoplasm"/>
    <property type="evidence" value="ECO:0000314"/>
    <property type="project" value="AgBase"/>
</dbReference>
<dbReference type="GO" id="GO:0005791">
    <property type="term" value="C:rough endoplasmic reticulum"/>
    <property type="evidence" value="ECO:0000314"/>
    <property type="project" value="AgBase"/>
</dbReference>
<dbReference type="GO" id="GO:0005790">
    <property type="term" value="C:smooth endoplasmic reticulum"/>
    <property type="evidence" value="ECO:0000314"/>
    <property type="project" value="AgBase"/>
</dbReference>
<dbReference type="GO" id="GO:0020037">
    <property type="term" value="F:heme binding"/>
    <property type="evidence" value="ECO:0007669"/>
    <property type="project" value="InterPro"/>
</dbReference>
<dbReference type="GO" id="GO:0005506">
    <property type="term" value="F:iron ion binding"/>
    <property type="evidence" value="ECO:0007669"/>
    <property type="project" value="InterPro"/>
</dbReference>
<dbReference type="GO" id="GO:0004508">
    <property type="term" value="F:steroid 17-alpha-monooxygenase activity"/>
    <property type="evidence" value="ECO:0007669"/>
    <property type="project" value="TreeGrafter"/>
</dbReference>
<dbReference type="GO" id="GO:0042446">
    <property type="term" value="P:hormone biosynthetic process"/>
    <property type="evidence" value="ECO:0007669"/>
    <property type="project" value="TreeGrafter"/>
</dbReference>
<dbReference type="GO" id="GO:0042448">
    <property type="term" value="P:progesterone metabolic process"/>
    <property type="evidence" value="ECO:0007669"/>
    <property type="project" value="TreeGrafter"/>
</dbReference>
<dbReference type="CDD" id="cd20676">
    <property type="entry name" value="CYP1A"/>
    <property type="match status" value="1"/>
</dbReference>
<dbReference type="FunFam" id="1.10.630.10:FF:000002">
    <property type="entry name" value="Cytochrome P450 1A1"/>
    <property type="match status" value="1"/>
</dbReference>
<dbReference type="Gene3D" id="1.10.630.10">
    <property type="entry name" value="Cytochrome P450"/>
    <property type="match status" value="1"/>
</dbReference>
<dbReference type="InterPro" id="IPR001128">
    <property type="entry name" value="Cyt_P450"/>
</dbReference>
<dbReference type="InterPro" id="IPR017972">
    <property type="entry name" value="Cyt_P450_CS"/>
</dbReference>
<dbReference type="InterPro" id="IPR002401">
    <property type="entry name" value="Cyt_P450_E_grp-I"/>
</dbReference>
<dbReference type="InterPro" id="IPR008066">
    <property type="entry name" value="Cyt_P450_E_grp-I_CYP1"/>
</dbReference>
<dbReference type="InterPro" id="IPR036396">
    <property type="entry name" value="Cyt_P450_sf"/>
</dbReference>
<dbReference type="PANTHER" id="PTHR24289:SF21">
    <property type="entry name" value="CYTOCHROME P450 1A"/>
    <property type="match status" value="1"/>
</dbReference>
<dbReference type="PANTHER" id="PTHR24289">
    <property type="entry name" value="STEROID 17-ALPHA-HYDROXYLASE/17,20 LYASE"/>
    <property type="match status" value="1"/>
</dbReference>
<dbReference type="Pfam" id="PF00067">
    <property type="entry name" value="p450"/>
    <property type="match status" value="1"/>
</dbReference>
<dbReference type="PRINTS" id="PR00463">
    <property type="entry name" value="EP450I"/>
</dbReference>
<dbReference type="PRINTS" id="PR01683">
    <property type="entry name" value="EP450ICYP1A"/>
</dbReference>
<dbReference type="PRINTS" id="PR00385">
    <property type="entry name" value="P450"/>
</dbReference>
<dbReference type="SUPFAM" id="SSF48264">
    <property type="entry name" value="Cytochrome P450"/>
    <property type="match status" value="1"/>
</dbReference>
<dbReference type="PROSITE" id="PS00086">
    <property type="entry name" value="CYTOCHROME_P450"/>
    <property type="match status" value="1"/>
</dbReference>
<name>CP1A1_ONCMY</name>
<organism>
    <name type="scientific">Oncorhynchus mykiss</name>
    <name type="common">Rainbow trout</name>
    <name type="synonym">Salmo gairdneri</name>
    <dbReference type="NCBI Taxonomy" id="8022"/>
    <lineage>
        <taxon>Eukaryota</taxon>
        <taxon>Metazoa</taxon>
        <taxon>Chordata</taxon>
        <taxon>Craniata</taxon>
        <taxon>Vertebrata</taxon>
        <taxon>Euteleostomi</taxon>
        <taxon>Actinopterygii</taxon>
        <taxon>Neopterygii</taxon>
        <taxon>Teleostei</taxon>
        <taxon>Protacanthopterygii</taxon>
        <taxon>Salmoniformes</taxon>
        <taxon>Salmonidae</taxon>
        <taxon>Salmoninae</taxon>
        <taxon>Oncorhynchus</taxon>
    </lineage>
</organism>
<protein>
    <recommendedName>
        <fullName>Cytochrome P450 1A1</fullName>
        <ecNumber>1.14.14.1</ecNumber>
    </recommendedName>
    <alternativeName>
        <fullName>CYP1A2</fullName>
    </alternativeName>
    <alternativeName>
        <fullName>CYPIA1</fullName>
    </alternativeName>
</protein>
<gene>
    <name type="primary">cyp1a1</name>
</gene>
<evidence type="ECO:0000250" key="1"/>
<evidence type="ECO:0000305" key="2"/>
<proteinExistence type="evidence at transcript level"/>